<evidence type="ECO:0000255" key="1">
    <source>
        <dbReference type="HAMAP-Rule" id="MF_00235"/>
    </source>
</evidence>
<name>KAD_FERNB</name>
<accession>A7HM31</accession>
<keyword id="KW-0067">ATP-binding</keyword>
<keyword id="KW-0963">Cytoplasm</keyword>
<keyword id="KW-0418">Kinase</keyword>
<keyword id="KW-0479">Metal-binding</keyword>
<keyword id="KW-0545">Nucleotide biosynthesis</keyword>
<keyword id="KW-0547">Nucleotide-binding</keyword>
<keyword id="KW-1185">Reference proteome</keyword>
<keyword id="KW-0808">Transferase</keyword>
<keyword id="KW-0862">Zinc</keyword>
<organism>
    <name type="scientific">Fervidobacterium nodosum (strain ATCC 35602 / DSM 5306 / Rt17-B1)</name>
    <dbReference type="NCBI Taxonomy" id="381764"/>
    <lineage>
        <taxon>Bacteria</taxon>
        <taxon>Thermotogati</taxon>
        <taxon>Thermotogota</taxon>
        <taxon>Thermotogae</taxon>
        <taxon>Thermotogales</taxon>
        <taxon>Fervidobacteriaceae</taxon>
        <taxon>Fervidobacterium</taxon>
    </lineage>
</organism>
<protein>
    <recommendedName>
        <fullName evidence="1">Adenylate kinase</fullName>
        <shortName evidence="1">AK</shortName>
        <ecNumber evidence="1">2.7.4.3</ecNumber>
    </recommendedName>
    <alternativeName>
        <fullName evidence="1">ATP-AMP transphosphorylase</fullName>
    </alternativeName>
    <alternativeName>
        <fullName evidence="1">ATP:AMP phosphotransferase</fullName>
    </alternativeName>
    <alternativeName>
        <fullName evidence="1">Adenylate monophosphate kinase</fullName>
    </alternativeName>
</protein>
<reference key="1">
    <citation type="submission" date="2007-07" db="EMBL/GenBank/DDBJ databases">
        <title>Complete sequence of Fervidobacterium nodosum Rt17-B1.</title>
        <authorList>
            <consortium name="US DOE Joint Genome Institute"/>
            <person name="Copeland A."/>
            <person name="Lucas S."/>
            <person name="Lapidus A."/>
            <person name="Barry K."/>
            <person name="Glavina del Rio T."/>
            <person name="Dalin E."/>
            <person name="Tice H."/>
            <person name="Pitluck S."/>
            <person name="Saunders E."/>
            <person name="Brettin T."/>
            <person name="Bruce D."/>
            <person name="Detter J.C."/>
            <person name="Han C."/>
            <person name="Schmutz J."/>
            <person name="Larimer F."/>
            <person name="Land M."/>
            <person name="Hauser L."/>
            <person name="Kyrpides N."/>
            <person name="Mikhailova N."/>
            <person name="Nelson K."/>
            <person name="Gogarten J.P."/>
            <person name="Noll K."/>
            <person name="Richardson P."/>
        </authorList>
    </citation>
    <scope>NUCLEOTIDE SEQUENCE [LARGE SCALE GENOMIC DNA]</scope>
    <source>
        <strain>ATCC 35602 / DSM 5306 / Rt17-B1</strain>
    </source>
</reference>
<comment type="function">
    <text evidence="1">Catalyzes the reversible transfer of the terminal phosphate group between ATP and AMP. Plays an important role in cellular energy homeostasis and in adenine nucleotide metabolism.</text>
</comment>
<comment type="catalytic activity">
    <reaction evidence="1">
        <text>AMP + ATP = 2 ADP</text>
        <dbReference type="Rhea" id="RHEA:12973"/>
        <dbReference type="ChEBI" id="CHEBI:30616"/>
        <dbReference type="ChEBI" id="CHEBI:456215"/>
        <dbReference type="ChEBI" id="CHEBI:456216"/>
        <dbReference type="EC" id="2.7.4.3"/>
    </reaction>
</comment>
<comment type="pathway">
    <text evidence="1">Purine metabolism; AMP biosynthesis via salvage pathway; AMP from ADP: step 1/1.</text>
</comment>
<comment type="subunit">
    <text evidence="1">Monomer.</text>
</comment>
<comment type="subcellular location">
    <subcellularLocation>
        <location evidence="1">Cytoplasm</location>
    </subcellularLocation>
</comment>
<comment type="domain">
    <text evidence="1">Consists of three domains, a large central CORE domain and two small peripheral domains, NMPbind and LID, which undergo movements during catalysis. The LID domain closes over the site of phosphoryl transfer upon ATP binding. Assembling and dissambling the active center during each catalytic cycle provides an effective means to prevent ATP hydrolysis. Some bacteria have evolved a zinc-coordinating structure that stabilizes the LID domain.</text>
</comment>
<comment type="similarity">
    <text evidence="1">Belongs to the adenylate kinase family.</text>
</comment>
<feature type="chain" id="PRO_1000071800" description="Adenylate kinase">
    <location>
        <begin position="1"/>
        <end position="218"/>
    </location>
</feature>
<feature type="region of interest" description="NMP" evidence="1">
    <location>
        <begin position="30"/>
        <end position="59"/>
    </location>
</feature>
<feature type="region of interest" description="LID" evidence="1">
    <location>
        <begin position="126"/>
        <end position="163"/>
    </location>
</feature>
<feature type="binding site" evidence="1">
    <location>
        <begin position="10"/>
        <end position="15"/>
    </location>
    <ligand>
        <name>ATP</name>
        <dbReference type="ChEBI" id="CHEBI:30616"/>
    </ligand>
</feature>
<feature type="binding site" evidence="1">
    <location>
        <position position="31"/>
    </location>
    <ligand>
        <name>AMP</name>
        <dbReference type="ChEBI" id="CHEBI:456215"/>
    </ligand>
</feature>
<feature type="binding site" evidence="1">
    <location>
        <position position="36"/>
    </location>
    <ligand>
        <name>AMP</name>
        <dbReference type="ChEBI" id="CHEBI:456215"/>
    </ligand>
</feature>
<feature type="binding site" evidence="1">
    <location>
        <begin position="57"/>
        <end position="59"/>
    </location>
    <ligand>
        <name>AMP</name>
        <dbReference type="ChEBI" id="CHEBI:456215"/>
    </ligand>
</feature>
<feature type="binding site" evidence="1">
    <location>
        <begin position="85"/>
        <end position="88"/>
    </location>
    <ligand>
        <name>AMP</name>
        <dbReference type="ChEBI" id="CHEBI:456215"/>
    </ligand>
</feature>
<feature type="binding site" evidence="1">
    <location>
        <position position="92"/>
    </location>
    <ligand>
        <name>AMP</name>
        <dbReference type="ChEBI" id="CHEBI:456215"/>
    </ligand>
</feature>
<feature type="binding site" evidence="1">
    <location>
        <position position="127"/>
    </location>
    <ligand>
        <name>ATP</name>
        <dbReference type="ChEBI" id="CHEBI:30616"/>
    </ligand>
</feature>
<feature type="binding site" evidence="1">
    <location>
        <position position="130"/>
    </location>
    <ligand>
        <name>Zn(2+)</name>
        <dbReference type="ChEBI" id="CHEBI:29105"/>
        <note>structural</note>
    </ligand>
</feature>
<feature type="binding site" evidence="1">
    <location>
        <position position="133"/>
    </location>
    <ligand>
        <name>Zn(2+)</name>
        <dbReference type="ChEBI" id="CHEBI:29105"/>
        <note>structural</note>
    </ligand>
</feature>
<feature type="binding site" evidence="1">
    <location>
        <begin position="136"/>
        <end position="137"/>
    </location>
    <ligand>
        <name>ATP</name>
        <dbReference type="ChEBI" id="CHEBI:30616"/>
    </ligand>
</feature>
<feature type="binding site" evidence="1">
    <location>
        <position position="150"/>
    </location>
    <ligand>
        <name>Zn(2+)</name>
        <dbReference type="ChEBI" id="CHEBI:29105"/>
        <note>structural</note>
    </ligand>
</feature>
<feature type="binding site" evidence="1">
    <location>
        <position position="153"/>
    </location>
    <ligand>
        <name>Zn(2+)</name>
        <dbReference type="ChEBI" id="CHEBI:29105"/>
        <note>structural</note>
    </ligand>
</feature>
<feature type="binding site" evidence="1">
    <location>
        <position position="160"/>
    </location>
    <ligand>
        <name>AMP</name>
        <dbReference type="ChEBI" id="CHEBI:456215"/>
    </ligand>
</feature>
<feature type="binding site" evidence="1">
    <location>
        <position position="171"/>
    </location>
    <ligand>
        <name>AMP</name>
        <dbReference type="ChEBI" id="CHEBI:456215"/>
    </ligand>
</feature>
<feature type="binding site" evidence="1">
    <location>
        <position position="199"/>
    </location>
    <ligand>
        <name>ATP</name>
        <dbReference type="ChEBI" id="CHEBI:30616"/>
    </ligand>
</feature>
<sequence>MNLIFLGPPGAGKGTYAKRVVEKYIIPHISTGDIFREAIAKGTELGRKVQDIVNSGNLVPDELTNALVEERLKQDDCKKGFILDGYPRTLNQAQALNEMLKKMGKELDGAIYFEVDEETVVQRISTRRVCSKCGKVYNVITLPSKVEGICDDCGGTLIQRDDDKEDIVRSRYRVYIEKTSPLIEYYKNQNKLFTLDGRKSVEEVMKILFNILGGFEKK</sequence>
<proteinExistence type="inferred from homology"/>
<dbReference type="EC" id="2.7.4.3" evidence="1"/>
<dbReference type="EMBL" id="CP000771">
    <property type="protein sequence ID" value="ABS60964.1"/>
    <property type="molecule type" value="Genomic_DNA"/>
</dbReference>
<dbReference type="RefSeq" id="WP_011994277.1">
    <property type="nucleotide sequence ID" value="NC_009718.1"/>
</dbReference>
<dbReference type="SMR" id="A7HM31"/>
<dbReference type="STRING" id="381764.Fnod_1117"/>
<dbReference type="KEGG" id="fno:Fnod_1117"/>
<dbReference type="eggNOG" id="COG0563">
    <property type="taxonomic scope" value="Bacteria"/>
</dbReference>
<dbReference type="HOGENOM" id="CLU_032354_1_2_0"/>
<dbReference type="OrthoDB" id="9805030at2"/>
<dbReference type="UniPathway" id="UPA00588">
    <property type="reaction ID" value="UER00649"/>
</dbReference>
<dbReference type="Proteomes" id="UP000002415">
    <property type="component" value="Chromosome"/>
</dbReference>
<dbReference type="GO" id="GO:0005737">
    <property type="term" value="C:cytoplasm"/>
    <property type="evidence" value="ECO:0007669"/>
    <property type="project" value="UniProtKB-SubCell"/>
</dbReference>
<dbReference type="GO" id="GO:0004017">
    <property type="term" value="F:adenylate kinase activity"/>
    <property type="evidence" value="ECO:0007669"/>
    <property type="project" value="UniProtKB-UniRule"/>
</dbReference>
<dbReference type="GO" id="GO:0005524">
    <property type="term" value="F:ATP binding"/>
    <property type="evidence" value="ECO:0007669"/>
    <property type="project" value="UniProtKB-UniRule"/>
</dbReference>
<dbReference type="GO" id="GO:0008270">
    <property type="term" value="F:zinc ion binding"/>
    <property type="evidence" value="ECO:0007669"/>
    <property type="project" value="UniProtKB-UniRule"/>
</dbReference>
<dbReference type="GO" id="GO:0044209">
    <property type="term" value="P:AMP salvage"/>
    <property type="evidence" value="ECO:0007669"/>
    <property type="project" value="UniProtKB-UniRule"/>
</dbReference>
<dbReference type="CDD" id="cd01428">
    <property type="entry name" value="ADK"/>
    <property type="match status" value="1"/>
</dbReference>
<dbReference type="FunFam" id="3.40.50.300:FF:000106">
    <property type="entry name" value="Adenylate kinase mitochondrial"/>
    <property type="match status" value="1"/>
</dbReference>
<dbReference type="Gene3D" id="3.40.50.300">
    <property type="entry name" value="P-loop containing nucleotide triphosphate hydrolases"/>
    <property type="match status" value="1"/>
</dbReference>
<dbReference type="HAMAP" id="MF_00235">
    <property type="entry name" value="Adenylate_kinase_Adk"/>
    <property type="match status" value="1"/>
</dbReference>
<dbReference type="InterPro" id="IPR006259">
    <property type="entry name" value="Adenyl_kin_sub"/>
</dbReference>
<dbReference type="InterPro" id="IPR000850">
    <property type="entry name" value="Adenylat/UMP-CMP_kin"/>
</dbReference>
<dbReference type="InterPro" id="IPR033690">
    <property type="entry name" value="Adenylat_kinase_CS"/>
</dbReference>
<dbReference type="InterPro" id="IPR007862">
    <property type="entry name" value="Adenylate_kinase_lid-dom"/>
</dbReference>
<dbReference type="InterPro" id="IPR027417">
    <property type="entry name" value="P-loop_NTPase"/>
</dbReference>
<dbReference type="NCBIfam" id="TIGR01351">
    <property type="entry name" value="adk"/>
    <property type="match status" value="1"/>
</dbReference>
<dbReference type="NCBIfam" id="NF001380">
    <property type="entry name" value="PRK00279.1-2"/>
    <property type="match status" value="1"/>
</dbReference>
<dbReference type="NCBIfam" id="NF001381">
    <property type="entry name" value="PRK00279.1-3"/>
    <property type="match status" value="1"/>
</dbReference>
<dbReference type="NCBIfam" id="NF001386">
    <property type="entry name" value="PRK00279.2-4"/>
    <property type="match status" value="1"/>
</dbReference>
<dbReference type="NCBIfam" id="NF011100">
    <property type="entry name" value="PRK14527.1"/>
    <property type="match status" value="1"/>
</dbReference>
<dbReference type="PANTHER" id="PTHR23359">
    <property type="entry name" value="NUCLEOTIDE KINASE"/>
    <property type="match status" value="1"/>
</dbReference>
<dbReference type="Pfam" id="PF00406">
    <property type="entry name" value="ADK"/>
    <property type="match status" value="1"/>
</dbReference>
<dbReference type="Pfam" id="PF05191">
    <property type="entry name" value="ADK_lid"/>
    <property type="match status" value="1"/>
</dbReference>
<dbReference type="PRINTS" id="PR00094">
    <property type="entry name" value="ADENYLTKNASE"/>
</dbReference>
<dbReference type="SUPFAM" id="SSF52540">
    <property type="entry name" value="P-loop containing nucleoside triphosphate hydrolases"/>
    <property type="match status" value="1"/>
</dbReference>
<dbReference type="PROSITE" id="PS00113">
    <property type="entry name" value="ADENYLATE_KINASE"/>
    <property type="match status" value="1"/>
</dbReference>
<gene>
    <name evidence="1" type="primary">adk</name>
    <name type="ordered locus">Fnod_1117</name>
</gene>